<accession>Q86IC9</accession>
<accession>Q552T5</accession>
<comment type="catalytic activity">
    <reaction>
        <text>(E)-caffeoyl-CoA + S-adenosyl-L-methionine = (E)-feruloyl-CoA + S-adenosyl-L-homocysteine + H(+)</text>
        <dbReference type="Rhea" id="RHEA:16925"/>
        <dbReference type="ChEBI" id="CHEBI:15378"/>
        <dbReference type="ChEBI" id="CHEBI:57856"/>
        <dbReference type="ChEBI" id="CHEBI:59789"/>
        <dbReference type="ChEBI" id="CHEBI:87136"/>
        <dbReference type="ChEBI" id="CHEBI:87305"/>
        <dbReference type="EC" id="2.1.1.104"/>
    </reaction>
</comment>
<comment type="similarity">
    <text evidence="1">Belongs to the class I-like SAM-binding methyltransferase superfamily. Cation-dependent O-methyltransferase family. CCoAMT subfamily.</text>
</comment>
<reference key="1">
    <citation type="journal article" date="2002" name="Nature">
        <title>Sequence and analysis of chromosome 2 of Dictyostelium discoideum.</title>
        <authorList>
            <person name="Gloeckner G."/>
            <person name="Eichinger L."/>
            <person name="Szafranski K."/>
            <person name="Pachebat J.A."/>
            <person name="Bankier A.T."/>
            <person name="Dear P.H."/>
            <person name="Lehmann R."/>
            <person name="Baumgart C."/>
            <person name="Parra G."/>
            <person name="Abril J.F."/>
            <person name="Guigo R."/>
            <person name="Kumpf K."/>
            <person name="Tunggal B."/>
            <person name="Cox E.C."/>
            <person name="Quail M.A."/>
            <person name="Platzer M."/>
            <person name="Rosenthal A."/>
            <person name="Noegel A.A."/>
        </authorList>
    </citation>
    <scope>NUCLEOTIDE SEQUENCE [LARGE SCALE GENOMIC DNA]</scope>
    <source>
        <strain>AX4</strain>
    </source>
</reference>
<reference key="2">
    <citation type="journal article" date="2005" name="Nature">
        <title>The genome of the social amoeba Dictyostelium discoideum.</title>
        <authorList>
            <person name="Eichinger L."/>
            <person name="Pachebat J.A."/>
            <person name="Gloeckner G."/>
            <person name="Rajandream M.A."/>
            <person name="Sucgang R."/>
            <person name="Berriman M."/>
            <person name="Song J."/>
            <person name="Olsen R."/>
            <person name="Szafranski K."/>
            <person name="Xu Q."/>
            <person name="Tunggal B."/>
            <person name="Kummerfeld S."/>
            <person name="Madera M."/>
            <person name="Konfortov B.A."/>
            <person name="Rivero F."/>
            <person name="Bankier A.T."/>
            <person name="Lehmann R."/>
            <person name="Hamlin N."/>
            <person name="Davies R."/>
            <person name="Gaudet P."/>
            <person name="Fey P."/>
            <person name="Pilcher K."/>
            <person name="Chen G."/>
            <person name="Saunders D."/>
            <person name="Sodergren E.J."/>
            <person name="Davis P."/>
            <person name="Kerhornou A."/>
            <person name="Nie X."/>
            <person name="Hall N."/>
            <person name="Anjard C."/>
            <person name="Hemphill L."/>
            <person name="Bason N."/>
            <person name="Farbrother P."/>
            <person name="Desany B."/>
            <person name="Just E."/>
            <person name="Morio T."/>
            <person name="Rost R."/>
            <person name="Churcher C.M."/>
            <person name="Cooper J."/>
            <person name="Haydock S."/>
            <person name="van Driessche N."/>
            <person name="Cronin A."/>
            <person name="Goodhead I."/>
            <person name="Muzny D.M."/>
            <person name="Mourier T."/>
            <person name="Pain A."/>
            <person name="Lu M."/>
            <person name="Harper D."/>
            <person name="Lindsay R."/>
            <person name="Hauser H."/>
            <person name="James K.D."/>
            <person name="Quiles M."/>
            <person name="Madan Babu M."/>
            <person name="Saito T."/>
            <person name="Buchrieser C."/>
            <person name="Wardroper A."/>
            <person name="Felder M."/>
            <person name="Thangavelu M."/>
            <person name="Johnson D."/>
            <person name="Knights A."/>
            <person name="Loulseged H."/>
            <person name="Mungall K.L."/>
            <person name="Oliver K."/>
            <person name="Price C."/>
            <person name="Quail M.A."/>
            <person name="Urushihara H."/>
            <person name="Hernandez J."/>
            <person name="Rabbinowitsch E."/>
            <person name="Steffen D."/>
            <person name="Sanders M."/>
            <person name="Ma J."/>
            <person name="Kohara Y."/>
            <person name="Sharp S."/>
            <person name="Simmonds M.N."/>
            <person name="Spiegler S."/>
            <person name="Tivey A."/>
            <person name="Sugano S."/>
            <person name="White B."/>
            <person name="Walker D."/>
            <person name="Woodward J.R."/>
            <person name="Winckler T."/>
            <person name="Tanaka Y."/>
            <person name="Shaulsky G."/>
            <person name="Schleicher M."/>
            <person name="Weinstock G.M."/>
            <person name="Rosenthal A."/>
            <person name="Cox E.C."/>
            <person name="Chisholm R.L."/>
            <person name="Gibbs R.A."/>
            <person name="Loomis W.F."/>
            <person name="Platzer M."/>
            <person name="Kay R.R."/>
            <person name="Williams J.G."/>
            <person name="Dear P.H."/>
            <person name="Noegel A.A."/>
            <person name="Barrell B.G."/>
            <person name="Kuspa A."/>
        </authorList>
    </citation>
    <scope>NUCLEOTIDE SEQUENCE [LARGE SCALE GENOMIC DNA]</scope>
    <source>
        <strain>AX4</strain>
    </source>
</reference>
<evidence type="ECO:0000255" key="1">
    <source>
        <dbReference type="PROSITE-ProRule" id="PRU01019"/>
    </source>
</evidence>
<dbReference type="EC" id="2.1.1.104"/>
<dbReference type="EMBL" id="AAFI02000013">
    <property type="protein sequence ID" value="EAL69500.1"/>
    <property type="molecule type" value="Genomic_DNA"/>
</dbReference>
<dbReference type="RefSeq" id="XP_643596.1">
    <property type="nucleotide sequence ID" value="XM_638504.1"/>
</dbReference>
<dbReference type="SMR" id="Q86IC9"/>
<dbReference type="FunCoup" id="Q86IC9">
    <property type="interactions" value="7"/>
</dbReference>
<dbReference type="STRING" id="44689.Q86IC9"/>
<dbReference type="PaxDb" id="44689-DDB0229910"/>
<dbReference type="EnsemblProtists" id="EAL69500">
    <property type="protein sequence ID" value="EAL69500"/>
    <property type="gene ID" value="DDB_G0275499"/>
</dbReference>
<dbReference type="GeneID" id="8620183"/>
<dbReference type="KEGG" id="ddi:DDB_G0275499"/>
<dbReference type="dictyBase" id="DDB_G0275499">
    <property type="gene designation" value="omt5"/>
</dbReference>
<dbReference type="VEuPathDB" id="AmoebaDB:DDB_G0275499"/>
<dbReference type="eggNOG" id="KOG1663">
    <property type="taxonomic scope" value="Eukaryota"/>
</dbReference>
<dbReference type="HOGENOM" id="CLU_067676_5_1_1"/>
<dbReference type="InParanoid" id="Q86IC9"/>
<dbReference type="OMA" id="PAYFEWA"/>
<dbReference type="PhylomeDB" id="Q86IC9"/>
<dbReference type="PRO" id="PR:Q86IC9"/>
<dbReference type="Proteomes" id="UP000002195">
    <property type="component" value="Chromosome 2"/>
</dbReference>
<dbReference type="GO" id="GO:0042409">
    <property type="term" value="F:caffeoyl-CoA O-methyltransferase activity"/>
    <property type="evidence" value="ECO:0007669"/>
    <property type="project" value="UniProtKB-EC"/>
</dbReference>
<dbReference type="GO" id="GO:0046872">
    <property type="term" value="F:metal ion binding"/>
    <property type="evidence" value="ECO:0007669"/>
    <property type="project" value="UniProtKB-KW"/>
</dbReference>
<dbReference type="GO" id="GO:0008757">
    <property type="term" value="F:S-adenosylmethionine-dependent methyltransferase activity"/>
    <property type="evidence" value="ECO:0000318"/>
    <property type="project" value="GO_Central"/>
</dbReference>
<dbReference type="GO" id="GO:0032259">
    <property type="term" value="P:methylation"/>
    <property type="evidence" value="ECO:0007669"/>
    <property type="project" value="UniProtKB-KW"/>
</dbReference>
<dbReference type="FunFam" id="3.40.50.150:FF:000978">
    <property type="match status" value="1"/>
</dbReference>
<dbReference type="Gene3D" id="3.40.50.150">
    <property type="entry name" value="Vaccinia Virus protein VP39"/>
    <property type="match status" value="1"/>
</dbReference>
<dbReference type="InterPro" id="IPR050362">
    <property type="entry name" value="Cation-dep_OMT"/>
</dbReference>
<dbReference type="InterPro" id="IPR029063">
    <property type="entry name" value="SAM-dependent_MTases_sf"/>
</dbReference>
<dbReference type="InterPro" id="IPR002935">
    <property type="entry name" value="SAM_O-MeTrfase"/>
</dbReference>
<dbReference type="PANTHER" id="PTHR10509:SF99">
    <property type="entry name" value="CAFFEOYL-COA O-METHYLTRANSFERASE 1-RELATED"/>
    <property type="match status" value="1"/>
</dbReference>
<dbReference type="PANTHER" id="PTHR10509">
    <property type="entry name" value="O-METHYLTRANSFERASE-RELATED"/>
    <property type="match status" value="1"/>
</dbReference>
<dbReference type="Pfam" id="PF01596">
    <property type="entry name" value="Methyltransf_3"/>
    <property type="match status" value="1"/>
</dbReference>
<dbReference type="SUPFAM" id="SSF53335">
    <property type="entry name" value="S-adenosyl-L-methionine-dependent methyltransferases"/>
    <property type="match status" value="1"/>
</dbReference>
<dbReference type="PROSITE" id="PS51682">
    <property type="entry name" value="SAM_OMT_I"/>
    <property type="match status" value="1"/>
</dbReference>
<protein>
    <recommendedName>
        <fullName>Probable caffeoyl-CoA O-methyltransferase 1</fullName>
        <ecNumber>2.1.1.104</ecNumber>
    </recommendedName>
    <alternativeName>
        <fullName>O-methyltransferase 5</fullName>
    </alternativeName>
</protein>
<sequence>MEKTTPTQYDVKVQYNNSILNYAIDHSDQLTDIQKELIQFTKENIERHIMLTQAEQCSFFKLLIQVLNAKKTIDIGVFTGLSSLTAALAMGDEGRVVACDVSTDYTQHALKFWAKAGVDHKINLKIQPASKTLQELIDQGEENTYDFVFIDADKTGYDTYYELSLKLIRKGGIIAIDNVLQHGRVADPNANVEPNLVAIRALNDKILADKRVTKTMLPIADGITLVTKIN</sequence>
<feature type="chain" id="PRO_0000371324" description="Probable caffeoyl-CoA O-methyltransferase 1">
    <location>
        <begin position="1"/>
        <end position="230"/>
    </location>
</feature>
<feature type="binding site" evidence="1">
    <location>
        <position position="52"/>
    </location>
    <ligand>
        <name>S-adenosyl-L-methionine</name>
        <dbReference type="ChEBI" id="CHEBI:59789"/>
    </ligand>
</feature>
<feature type="binding site" evidence="1">
    <location>
        <position position="74"/>
    </location>
    <ligand>
        <name>S-adenosyl-L-methionine</name>
        <dbReference type="ChEBI" id="CHEBI:59789"/>
    </ligand>
</feature>
<feature type="binding site" evidence="1">
    <location>
        <begin position="76"/>
        <end position="77"/>
    </location>
    <ligand>
        <name>S-adenosyl-L-methionine</name>
        <dbReference type="ChEBI" id="CHEBI:59789"/>
    </ligand>
</feature>
<feature type="binding site" evidence="1">
    <location>
        <position position="82"/>
    </location>
    <ligand>
        <name>S-adenosyl-L-methionine</name>
        <dbReference type="ChEBI" id="CHEBI:59789"/>
    </ligand>
</feature>
<feature type="binding site" evidence="1">
    <location>
        <position position="100"/>
    </location>
    <ligand>
        <name>S-adenosyl-L-methionine</name>
        <dbReference type="ChEBI" id="CHEBI:59789"/>
    </ligand>
</feature>
<feature type="binding site" evidence="1">
    <location>
        <position position="129"/>
    </location>
    <ligand>
        <name>S-adenosyl-L-methionine</name>
        <dbReference type="ChEBI" id="CHEBI:59789"/>
    </ligand>
</feature>
<feature type="binding site" evidence="1">
    <location>
        <position position="151"/>
    </location>
    <ligand>
        <name>a divalent metal cation</name>
        <dbReference type="ChEBI" id="CHEBI:60240"/>
    </ligand>
</feature>
<feature type="binding site" evidence="1">
    <location>
        <position position="151"/>
    </location>
    <ligand>
        <name>S-adenosyl-L-methionine</name>
        <dbReference type="ChEBI" id="CHEBI:59789"/>
    </ligand>
</feature>
<feature type="binding site" evidence="1">
    <location>
        <position position="153"/>
    </location>
    <ligand>
        <name>S-adenosyl-L-methionine</name>
        <dbReference type="ChEBI" id="CHEBI:59789"/>
    </ligand>
</feature>
<feature type="binding site" evidence="1">
    <location>
        <position position="160"/>
    </location>
    <ligand>
        <name>S-adenosyl-L-methionine</name>
        <dbReference type="ChEBI" id="CHEBI:59789"/>
    </ligand>
</feature>
<feature type="binding site" evidence="1">
    <location>
        <position position="177"/>
    </location>
    <ligand>
        <name>a divalent metal cation</name>
        <dbReference type="ChEBI" id="CHEBI:60240"/>
    </ligand>
</feature>
<feature type="binding site" evidence="1">
    <location>
        <position position="178"/>
    </location>
    <ligand>
        <name>a divalent metal cation</name>
        <dbReference type="ChEBI" id="CHEBI:60240"/>
    </ligand>
</feature>
<organism>
    <name type="scientific">Dictyostelium discoideum</name>
    <name type="common">Social amoeba</name>
    <dbReference type="NCBI Taxonomy" id="44689"/>
    <lineage>
        <taxon>Eukaryota</taxon>
        <taxon>Amoebozoa</taxon>
        <taxon>Evosea</taxon>
        <taxon>Eumycetozoa</taxon>
        <taxon>Dictyostelia</taxon>
        <taxon>Dictyosteliales</taxon>
        <taxon>Dictyosteliaceae</taxon>
        <taxon>Dictyostelium</taxon>
    </lineage>
</organism>
<gene>
    <name type="primary">omt5</name>
    <name type="ORF">DDB_G0275499</name>
</gene>
<proteinExistence type="inferred from homology"/>
<name>CAMT1_DICDI</name>
<keyword id="KW-0479">Metal-binding</keyword>
<keyword id="KW-0489">Methyltransferase</keyword>
<keyword id="KW-1185">Reference proteome</keyword>
<keyword id="KW-0949">S-adenosyl-L-methionine</keyword>
<keyword id="KW-0808">Transferase</keyword>